<comment type="catalytic activity">
    <reaction>
        <text>tRNA(Asp) + L-aspartate + ATP = L-aspartyl-tRNA(Asp) + AMP + diphosphate</text>
        <dbReference type="Rhea" id="RHEA:19649"/>
        <dbReference type="Rhea" id="RHEA-COMP:9660"/>
        <dbReference type="Rhea" id="RHEA-COMP:9678"/>
        <dbReference type="ChEBI" id="CHEBI:29991"/>
        <dbReference type="ChEBI" id="CHEBI:30616"/>
        <dbReference type="ChEBI" id="CHEBI:33019"/>
        <dbReference type="ChEBI" id="CHEBI:78442"/>
        <dbReference type="ChEBI" id="CHEBI:78516"/>
        <dbReference type="ChEBI" id="CHEBI:456215"/>
        <dbReference type="EC" id="6.1.1.12"/>
    </reaction>
</comment>
<comment type="subcellular location">
    <subcellularLocation>
        <location evidence="1">Cytoplasm</location>
    </subcellularLocation>
</comment>
<comment type="similarity">
    <text evidence="3">Belongs to the class-II aminoacyl-tRNA synthetase family. Type 2 subfamily.</text>
</comment>
<gene>
    <name type="primary">aspS2</name>
    <name type="ORF">DDB_G0272304</name>
</gene>
<reference key="1">
    <citation type="journal article" date="2002" name="Nature">
        <title>Sequence and analysis of chromosome 2 of Dictyostelium discoideum.</title>
        <authorList>
            <person name="Gloeckner G."/>
            <person name="Eichinger L."/>
            <person name="Szafranski K."/>
            <person name="Pachebat J.A."/>
            <person name="Bankier A.T."/>
            <person name="Dear P.H."/>
            <person name="Lehmann R."/>
            <person name="Baumgart C."/>
            <person name="Parra G."/>
            <person name="Abril J.F."/>
            <person name="Guigo R."/>
            <person name="Kumpf K."/>
            <person name="Tunggal B."/>
            <person name="Cox E.C."/>
            <person name="Quail M.A."/>
            <person name="Platzer M."/>
            <person name="Rosenthal A."/>
            <person name="Noegel A.A."/>
        </authorList>
    </citation>
    <scope>NUCLEOTIDE SEQUENCE [LARGE SCALE GENOMIC DNA]</scope>
    <source>
        <strain>AX4</strain>
    </source>
</reference>
<reference key="2">
    <citation type="journal article" date="2005" name="Nature">
        <title>The genome of the social amoeba Dictyostelium discoideum.</title>
        <authorList>
            <person name="Eichinger L."/>
            <person name="Pachebat J.A."/>
            <person name="Gloeckner G."/>
            <person name="Rajandream M.A."/>
            <person name="Sucgang R."/>
            <person name="Berriman M."/>
            <person name="Song J."/>
            <person name="Olsen R."/>
            <person name="Szafranski K."/>
            <person name="Xu Q."/>
            <person name="Tunggal B."/>
            <person name="Kummerfeld S."/>
            <person name="Madera M."/>
            <person name="Konfortov B.A."/>
            <person name="Rivero F."/>
            <person name="Bankier A.T."/>
            <person name="Lehmann R."/>
            <person name="Hamlin N."/>
            <person name="Davies R."/>
            <person name="Gaudet P."/>
            <person name="Fey P."/>
            <person name="Pilcher K."/>
            <person name="Chen G."/>
            <person name="Saunders D."/>
            <person name="Sodergren E.J."/>
            <person name="Davis P."/>
            <person name="Kerhornou A."/>
            <person name="Nie X."/>
            <person name="Hall N."/>
            <person name="Anjard C."/>
            <person name="Hemphill L."/>
            <person name="Bason N."/>
            <person name="Farbrother P."/>
            <person name="Desany B."/>
            <person name="Just E."/>
            <person name="Morio T."/>
            <person name="Rost R."/>
            <person name="Churcher C.M."/>
            <person name="Cooper J."/>
            <person name="Haydock S."/>
            <person name="van Driessche N."/>
            <person name="Cronin A."/>
            <person name="Goodhead I."/>
            <person name="Muzny D.M."/>
            <person name="Mourier T."/>
            <person name="Pain A."/>
            <person name="Lu M."/>
            <person name="Harper D."/>
            <person name="Lindsay R."/>
            <person name="Hauser H."/>
            <person name="James K.D."/>
            <person name="Quiles M."/>
            <person name="Madan Babu M."/>
            <person name="Saito T."/>
            <person name="Buchrieser C."/>
            <person name="Wardroper A."/>
            <person name="Felder M."/>
            <person name="Thangavelu M."/>
            <person name="Johnson D."/>
            <person name="Knights A."/>
            <person name="Loulseged H."/>
            <person name="Mungall K.L."/>
            <person name="Oliver K."/>
            <person name="Price C."/>
            <person name="Quail M.A."/>
            <person name="Urushihara H."/>
            <person name="Hernandez J."/>
            <person name="Rabbinowitsch E."/>
            <person name="Steffen D."/>
            <person name="Sanders M."/>
            <person name="Ma J."/>
            <person name="Kohara Y."/>
            <person name="Sharp S."/>
            <person name="Simmonds M.N."/>
            <person name="Spiegler S."/>
            <person name="Tivey A."/>
            <person name="Sugano S."/>
            <person name="White B."/>
            <person name="Walker D."/>
            <person name="Woodward J.R."/>
            <person name="Winckler T."/>
            <person name="Tanaka Y."/>
            <person name="Shaulsky G."/>
            <person name="Schleicher M."/>
            <person name="Weinstock G.M."/>
            <person name="Rosenthal A."/>
            <person name="Cox E.C."/>
            <person name="Chisholm R.L."/>
            <person name="Gibbs R.A."/>
            <person name="Loomis W.F."/>
            <person name="Platzer M."/>
            <person name="Kay R.R."/>
            <person name="Williams J.G."/>
            <person name="Dear P.H."/>
            <person name="Noegel A.A."/>
            <person name="Barrell B.G."/>
            <person name="Kuspa A."/>
        </authorList>
    </citation>
    <scope>NUCLEOTIDE SEQUENCE [LARGE SCALE GENOMIC DNA]</scope>
    <source>
        <strain>AX4</strain>
    </source>
</reference>
<protein>
    <recommendedName>
        <fullName>Aspartate--tRNA ligase, cytoplasmic 2</fullName>
        <ecNumber>6.1.1.12</ecNumber>
    </recommendedName>
    <alternativeName>
        <fullName>Aspartyl-tRNA synthetase 2</fullName>
        <shortName>AspRS 2</shortName>
    </alternativeName>
</protein>
<dbReference type="EC" id="6.1.1.12"/>
<dbReference type="EMBL" id="AAFI02000008">
    <property type="protein sequence ID" value="EAL71304.1"/>
    <property type="molecule type" value="Genomic_DNA"/>
</dbReference>
<dbReference type="RefSeq" id="XP_645305.1">
    <property type="nucleotide sequence ID" value="XM_640213.1"/>
</dbReference>
<dbReference type="SMR" id="Q559M9"/>
<dbReference type="FunCoup" id="Q559M9">
    <property type="interactions" value="44"/>
</dbReference>
<dbReference type="STRING" id="44689.Q559M9"/>
<dbReference type="PaxDb" id="44689-DDB0231309"/>
<dbReference type="EnsemblProtists" id="EAL71304">
    <property type="protein sequence ID" value="EAL71304"/>
    <property type="gene ID" value="DDB_G0272304"/>
</dbReference>
<dbReference type="GeneID" id="8618471"/>
<dbReference type="KEGG" id="ddi:DDB_G0272304"/>
<dbReference type="dictyBase" id="DDB_G0272304">
    <property type="gene designation" value="aspS2"/>
</dbReference>
<dbReference type="VEuPathDB" id="AmoebaDB:DDB_G0272304"/>
<dbReference type="eggNOG" id="KOG0556">
    <property type="taxonomic scope" value="Eukaryota"/>
</dbReference>
<dbReference type="HOGENOM" id="CLU_004553_2_1_1"/>
<dbReference type="InParanoid" id="Q559M9"/>
<dbReference type="OMA" id="NAIMRIQ"/>
<dbReference type="PhylomeDB" id="Q559M9"/>
<dbReference type="PRO" id="PR:Q559M9"/>
<dbReference type="Proteomes" id="UP000002195">
    <property type="component" value="Chromosome 2"/>
</dbReference>
<dbReference type="GO" id="GO:0017101">
    <property type="term" value="C:aminoacyl-tRNA synthetase multienzyme complex"/>
    <property type="evidence" value="ECO:0000318"/>
    <property type="project" value="GO_Central"/>
</dbReference>
<dbReference type="GO" id="GO:0005737">
    <property type="term" value="C:cytoplasm"/>
    <property type="evidence" value="ECO:0000250"/>
    <property type="project" value="dictyBase"/>
</dbReference>
<dbReference type="GO" id="GO:0005829">
    <property type="term" value="C:cytosol"/>
    <property type="evidence" value="ECO:0000318"/>
    <property type="project" value="GO_Central"/>
</dbReference>
<dbReference type="GO" id="GO:0004815">
    <property type="term" value="F:aspartate-tRNA ligase activity"/>
    <property type="evidence" value="ECO:0000318"/>
    <property type="project" value="GO_Central"/>
</dbReference>
<dbReference type="GO" id="GO:0005524">
    <property type="term" value="F:ATP binding"/>
    <property type="evidence" value="ECO:0007669"/>
    <property type="project" value="UniProtKB-KW"/>
</dbReference>
<dbReference type="GO" id="GO:0003723">
    <property type="term" value="F:RNA binding"/>
    <property type="evidence" value="ECO:0000318"/>
    <property type="project" value="GO_Central"/>
</dbReference>
<dbReference type="GO" id="GO:0006422">
    <property type="term" value="P:aspartyl-tRNA aminoacylation"/>
    <property type="evidence" value="ECO:0000318"/>
    <property type="project" value="GO_Central"/>
</dbReference>
<dbReference type="CDD" id="cd04320">
    <property type="entry name" value="AspRS_cyto_N"/>
    <property type="match status" value="1"/>
</dbReference>
<dbReference type="FunFam" id="3.30.930.10:FF:000038">
    <property type="entry name" value="Aspartate--tRNA ligase"/>
    <property type="match status" value="1"/>
</dbReference>
<dbReference type="Gene3D" id="3.30.930.10">
    <property type="entry name" value="Bira Bifunctional Protein, Domain 2"/>
    <property type="match status" value="1"/>
</dbReference>
<dbReference type="Gene3D" id="2.40.50.140">
    <property type="entry name" value="Nucleic acid-binding proteins"/>
    <property type="match status" value="1"/>
</dbReference>
<dbReference type="HAMAP" id="MF_02075">
    <property type="entry name" value="Asp_tRNA_synth_type2"/>
    <property type="match status" value="1"/>
</dbReference>
<dbReference type="InterPro" id="IPR004364">
    <property type="entry name" value="Aa-tRNA-synt_II"/>
</dbReference>
<dbReference type="InterPro" id="IPR006195">
    <property type="entry name" value="aa-tRNA-synth_II"/>
</dbReference>
<dbReference type="InterPro" id="IPR045864">
    <property type="entry name" value="aa-tRNA-synth_II/BPL/LPL"/>
</dbReference>
<dbReference type="InterPro" id="IPR004523">
    <property type="entry name" value="Asp-tRNA_synthase_2"/>
</dbReference>
<dbReference type="InterPro" id="IPR002312">
    <property type="entry name" value="Asp/Asn-tRNA-synth_IIb"/>
</dbReference>
<dbReference type="InterPro" id="IPR012340">
    <property type="entry name" value="NA-bd_OB-fold"/>
</dbReference>
<dbReference type="PANTHER" id="PTHR43450:SF1">
    <property type="entry name" value="ASPARTATE--TRNA LIGASE, CYTOPLASMIC"/>
    <property type="match status" value="1"/>
</dbReference>
<dbReference type="PANTHER" id="PTHR43450">
    <property type="entry name" value="ASPARTYL-TRNA SYNTHETASE"/>
    <property type="match status" value="1"/>
</dbReference>
<dbReference type="Pfam" id="PF00152">
    <property type="entry name" value="tRNA-synt_2"/>
    <property type="match status" value="1"/>
</dbReference>
<dbReference type="PRINTS" id="PR01042">
    <property type="entry name" value="TRNASYNTHASP"/>
</dbReference>
<dbReference type="SUPFAM" id="SSF55681">
    <property type="entry name" value="Class II aaRS and biotin synthetases"/>
    <property type="match status" value="1"/>
</dbReference>
<dbReference type="SUPFAM" id="SSF50249">
    <property type="entry name" value="Nucleic acid-binding proteins"/>
    <property type="match status" value="1"/>
</dbReference>
<dbReference type="PROSITE" id="PS50862">
    <property type="entry name" value="AA_TRNA_LIGASE_II"/>
    <property type="match status" value="1"/>
</dbReference>
<name>SYDC2_DICDI</name>
<organism>
    <name type="scientific">Dictyostelium discoideum</name>
    <name type="common">Social amoeba</name>
    <dbReference type="NCBI Taxonomy" id="44689"/>
    <lineage>
        <taxon>Eukaryota</taxon>
        <taxon>Amoebozoa</taxon>
        <taxon>Evosea</taxon>
        <taxon>Eumycetozoa</taxon>
        <taxon>Dictyostelia</taxon>
        <taxon>Dictyosteliales</taxon>
        <taxon>Dictyosteliaceae</taxon>
        <taxon>Dictyostelium</taxon>
    </lineage>
</organism>
<sequence length="569" mass="67218">MSEENNHKEKSKNEIKKEKKKIEKEKKITELKSKKKINEKNNTINYDDDDDNDDDNFKNKKWGEINNENYKEIIKNRFVKEWSNISDLNESCVGKYVLIRARVSNIRSFGNSLCFLQLRDGLSSIQAVISKNDENNSKSMIHFINSTITKESIIDIEAILTNSSTPIESCIIKNLELKIYSLFLQSKSNSSLPLQFDDLSKPTTYQNYDDNGYTYVIPLNSRLNNRCLDLRTFYNLSIFKIQSAISNLFRDQLLINDFIEIHSPKIIKQSINENSFKLNYFNEIAYLSESTQFYRQLAIVSDFKRVFEIGPVYRTDLGHTHRHLNEFTSLDFEMTFKDHYHEVLDFLDNLMISIFKILETNYENELKIINNYQLQFEKFKFSTKTPRFTFSEVKLMLIEFSENENNKFCMELFDYLNVQEERIFGKIVKEKFNVDYYIIEKPSSEYQPFYIMPDSNNEKLLNSFHIYINGEKIGSGSQRIHDWKLLEKRYKNYYINHNNNNNNNNNNNNNNNNNNNNNNIENYINIFKFGCSQHAGCSIGLERLVMAYLGLENIRKASFCPRDPTRLTP</sequence>
<feature type="chain" id="PRO_0000327968" description="Aspartate--tRNA ligase, cytoplasmic 2">
    <location>
        <begin position="1"/>
        <end position="569"/>
    </location>
</feature>
<feature type="region of interest" description="Disordered" evidence="2">
    <location>
        <begin position="1"/>
        <end position="23"/>
    </location>
</feature>
<feature type="region of interest" description="Aspartate" evidence="1">
    <location>
        <begin position="292"/>
        <end position="295"/>
    </location>
</feature>
<feature type="binding site" evidence="1">
    <location>
        <begin position="314"/>
        <end position="316"/>
    </location>
    <ligand>
        <name>ATP</name>
        <dbReference type="ChEBI" id="CHEBI:30616"/>
    </ligand>
</feature>
<feature type="binding site" evidence="1">
    <location>
        <position position="314"/>
    </location>
    <ligand>
        <name>L-aspartate</name>
        <dbReference type="ChEBI" id="CHEBI:29991"/>
    </ligand>
</feature>
<feature type="binding site" evidence="1">
    <location>
        <begin position="322"/>
        <end position="324"/>
    </location>
    <ligand>
        <name>ATP</name>
        <dbReference type="ChEBI" id="CHEBI:30616"/>
    </ligand>
</feature>
<feature type="binding site" evidence="1">
    <location>
        <position position="475"/>
    </location>
    <ligand>
        <name>L-aspartate</name>
        <dbReference type="ChEBI" id="CHEBI:29991"/>
    </ligand>
</feature>
<feature type="binding site" evidence="1">
    <location>
        <position position="479"/>
    </location>
    <ligand>
        <name>L-aspartate</name>
        <dbReference type="ChEBI" id="CHEBI:29991"/>
    </ligand>
</feature>
<feature type="binding site" evidence="1">
    <location>
        <begin position="540"/>
        <end position="543"/>
    </location>
    <ligand>
        <name>ATP</name>
        <dbReference type="ChEBI" id="CHEBI:30616"/>
    </ligand>
</feature>
<evidence type="ECO:0000250" key="1"/>
<evidence type="ECO:0000256" key="2">
    <source>
        <dbReference type="SAM" id="MobiDB-lite"/>
    </source>
</evidence>
<evidence type="ECO:0000305" key="3"/>
<accession>Q559M9</accession>
<accession>Q75JQ2</accession>
<keyword id="KW-0030">Aminoacyl-tRNA synthetase</keyword>
<keyword id="KW-0067">ATP-binding</keyword>
<keyword id="KW-0963">Cytoplasm</keyword>
<keyword id="KW-0436">Ligase</keyword>
<keyword id="KW-0547">Nucleotide-binding</keyword>
<keyword id="KW-0648">Protein biosynthesis</keyword>
<keyword id="KW-1185">Reference proteome</keyword>
<proteinExistence type="inferred from homology"/>